<name>FRMR_ECO57</name>
<sequence>MPSTPEEKKKVLTRVRRIRGQIDALERSLEGDAECRAILQQIAAVRGAANGLMAEVLESHIRETFDRNDCYSREVSQSVDDTIELVRAYLK</sequence>
<gene>
    <name evidence="1" type="primary">frmR</name>
    <name type="ordered locus">Z0457</name>
    <name type="ordered locus">ECs0412</name>
</gene>
<feature type="chain" id="PRO_0000340124" description="Transcriptional repressor FrmR">
    <location>
        <begin position="1"/>
        <end position="91"/>
    </location>
</feature>
<feature type="site" description="Important for response to formaldehyde" evidence="1">
    <location>
        <position position="2"/>
    </location>
</feature>
<feature type="site" description="Important for response to formaldehyde" evidence="1">
    <location>
        <position position="35"/>
    </location>
</feature>
<evidence type="ECO:0000250" key="1">
    <source>
        <dbReference type="UniProtKB" id="P0AAP3"/>
    </source>
</evidence>
<evidence type="ECO:0000305" key="2"/>
<organism>
    <name type="scientific">Escherichia coli O157:H7</name>
    <dbReference type="NCBI Taxonomy" id="83334"/>
    <lineage>
        <taxon>Bacteria</taxon>
        <taxon>Pseudomonadati</taxon>
        <taxon>Pseudomonadota</taxon>
        <taxon>Gammaproteobacteria</taxon>
        <taxon>Enterobacterales</taxon>
        <taxon>Enterobacteriaceae</taxon>
        <taxon>Escherichia</taxon>
    </lineage>
</organism>
<reference key="1">
    <citation type="journal article" date="2001" name="Nature">
        <title>Genome sequence of enterohaemorrhagic Escherichia coli O157:H7.</title>
        <authorList>
            <person name="Perna N.T."/>
            <person name="Plunkett G. III"/>
            <person name="Burland V."/>
            <person name="Mau B."/>
            <person name="Glasner J.D."/>
            <person name="Rose D.J."/>
            <person name="Mayhew G.F."/>
            <person name="Evans P.S."/>
            <person name="Gregor J."/>
            <person name="Kirkpatrick H.A."/>
            <person name="Posfai G."/>
            <person name="Hackett J."/>
            <person name="Klink S."/>
            <person name="Boutin A."/>
            <person name="Shao Y."/>
            <person name="Miller L."/>
            <person name="Grotbeck E.J."/>
            <person name="Davis N.W."/>
            <person name="Lim A."/>
            <person name="Dimalanta E.T."/>
            <person name="Potamousis K."/>
            <person name="Apodaca J."/>
            <person name="Anantharaman T.S."/>
            <person name="Lin J."/>
            <person name="Yen G."/>
            <person name="Schwartz D.C."/>
            <person name="Welch R.A."/>
            <person name="Blattner F.R."/>
        </authorList>
    </citation>
    <scope>NUCLEOTIDE SEQUENCE [LARGE SCALE GENOMIC DNA]</scope>
    <source>
        <strain>O157:H7 / EDL933 / ATCC 700927 / EHEC</strain>
    </source>
</reference>
<reference key="2">
    <citation type="journal article" date="2001" name="DNA Res.">
        <title>Complete genome sequence of enterohemorrhagic Escherichia coli O157:H7 and genomic comparison with a laboratory strain K-12.</title>
        <authorList>
            <person name="Hayashi T."/>
            <person name="Makino K."/>
            <person name="Ohnishi M."/>
            <person name="Kurokawa K."/>
            <person name="Ishii K."/>
            <person name="Yokoyama K."/>
            <person name="Han C.-G."/>
            <person name="Ohtsubo E."/>
            <person name="Nakayama K."/>
            <person name="Murata T."/>
            <person name="Tanaka M."/>
            <person name="Tobe T."/>
            <person name="Iida T."/>
            <person name="Takami H."/>
            <person name="Honda T."/>
            <person name="Sasakawa C."/>
            <person name="Ogasawara N."/>
            <person name="Yasunaga T."/>
            <person name="Kuhara S."/>
            <person name="Shiba T."/>
            <person name="Hattori M."/>
            <person name="Shinagawa H."/>
        </authorList>
    </citation>
    <scope>NUCLEOTIDE SEQUENCE [LARGE SCALE GENOMIC DNA]</scope>
    <source>
        <strain>O157:H7 / Sakai / RIMD 0509952 / EHEC</strain>
    </source>
</reference>
<proteinExistence type="inferred from homology"/>
<accession>Q8X5J3</accession>
<accession>Q7AH44</accession>
<protein>
    <recommendedName>
        <fullName evidence="1">Transcriptional repressor FrmR</fullName>
    </recommendedName>
</protein>
<comment type="function">
    <text evidence="1">Formaldehyde sensor. In the absence of formaldehyde, mediates repression of the frmRAB operon. Acts by binding directly to the frmRAB promoter region. In the presence of formaldehyde, it dissociates from the frmRAB promoter region and allows expression of the formaldehyde detoxification system encoded by frmA and frmB.</text>
</comment>
<comment type="subunit">
    <text evidence="1">Homotetramer.</text>
</comment>
<comment type="subcellular location">
    <subcellularLocation>
        <location evidence="1">Cytoplasm</location>
    </subcellularLocation>
</comment>
<comment type="similarity">
    <text evidence="2">Belongs to the FrmR/RcnR family.</text>
</comment>
<comment type="sequence caution" evidence="2">
    <conflict type="erroneous initiation">
        <sequence resource="EMBL-CDS" id="AAG54708"/>
    </conflict>
    <text>Extended N-terminus.</text>
</comment>
<keyword id="KW-0963">Cytoplasm</keyword>
<keyword id="KW-0238">DNA-binding</keyword>
<keyword id="KW-1185">Reference proteome</keyword>
<keyword id="KW-0678">Repressor</keyword>
<keyword id="KW-0804">Transcription</keyword>
<keyword id="KW-0805">Transcription regulation</keyword>
<dbReference type="EMBL" id="AE005174">
    <property type="protein sequence ID" value="AAG54708.1"/>
    <property type="status" value="ALT_INIT"/>
    <property type="molecule type" value="Genomic_DNA"/>
</dbReference>
<dbReference type="EMBL" id="BA000007">
    <property type="protein sequence ID" value="BAB33835.2"/>
    <property type="molecule type" value="Genomic_DNA"/>
</dbReference>
<dbReference type="PIR" id="D90680">
    <property type="entry name" value="D90680"/>
</dbReference>
<dbReference type="PIR" id="E64763">
    <property type="entry name" value="E64763"/>
</dbReference>
<dbReference type="PIR" id="H85530">
    <property type="entry name" value="H85530"/>
</dbReference>
<dbReference type="RefSeq" id="NP_308439.4">
    <property type="nucleotide sequence ID" value="NC_002695.1"/>
</dbReference>
<dbReference type="RefSeq" id="WP_001141271.1">
    <property type="nucleotide sequence ID" value="NZ_VOAI01000005.1"/>
</dbReference>
<dbReference type="SMR" id="Q8X5J3"/>
<dbReference type="STRING" id="155864.Z0457"/>
<dbReference type="GeneID" id="914514"/>
<dbReference type="GeneID" id="93777098"/>
<dbReference type="KEGG" id="ece:Z0457"/>
<dbReference type="KEGG" id="ecs:ECs_0412"/>
<dbReference type="PATRIC" id="fig|386585.9.peg.507"/>
<dbReference type="eggNOG" id="COG1937">
    <property type="taxonomic scope" value="Bacteria"/>
</dbReference>
<dbReference type="HOGENOM" id="CLU_130332_3_0_6"/>
<dbReference type="OMA" id="IAAFRTY"/>
<dbReference type="Proteomes" id="UP000000558">
    <property type="component" value="Chromosome"/>
</dbReference>
<dbReference type="Proteomes" id="UP000002519">
    <property type="component" value="Chromosome"/>
</dbReference>
<dbReference type="GO" id="GO:0005737">
    <property type="term" value="C:cytoplasm"/>
    <property type="evidence" value="ECO:0007669"/>
    <property type="project" value="UniProtKB-SubCell"/>
</dbReference>
<dbReference type="GO" id="GO:0003677">
    <property type="term" value="F:DNA binding"/>
    <property type="evidence" value="ECO:0007669"/>
    <property type="project" value="UniProtKB-KW"/>
</dbReference>
<dbReference type="GO" id="GO:0046872">
    <property type="term" value="F:metal ion binding"/>
    <property type="evidence" value="ECO:0007669"/>
    <property type="project" value="InterPro"/>
</dbReference>
<dbReference type="GO" id="GO:0045892">
    <property type="term" value="P:negative regulation of DNA-templated transcription"/>
    <property type="evidence" value="ECO:0007669"/>
    <property type="project" value="UniProtKB-ARBA"/>
</dbReference>
<dbReference type="CDD" id="cd10153">
    <property type="entry name" value="RcnR-FrmR-like_DUF156"/>
    <property type="match status" value="1"/>
</dbReference>
<dbReference type="FunFam" id="1.20.58.1000:FF:000002">
    <property type="entry name" value="Transcriptional repressor FrmR"/>
    <property type="match status" value="1"/>
</dbReference>
<dbReference type="Gene3D" id="1.20.58.1000">
    <property type="entry name" value="Metal-sensitive repressor, helix protomer"/>
    <property type="match status" value="1"/>
</dbReference>
<dbReference type="InterPro" id="IPR003735">
    <property type="entry name" value="Metal_Tscrpt_repr"/>
</dbReference>
<dbReference type="InterPro" id="IPR038390">
    <property type="entry name" value="Metal_Tscrpt_repr_sf"/>
</dbReference>
<dbReference type="NCBIfam" id="NF008464">
    <property type="entry name" value="PRK11352.1"/>
    <property type="match status" value="1"/>
</dbReference>
<dbReference type="PANTHER" id="PTHR33677:SF5">
    <property type="entry name" value="TRANSCRIPTIONAL REPRESSOR FRMR"/>
    <property type="match status" value="1"/>
</dbReference>
<dbReference type="PANTHER" id="PTHR33677">
    <property type="entry name" value="TRANSCRIPTIONAL REPRESSOR FRMR-RELATED"/>
    <property type="match status" value="1"/>
</dbReference>
<dbReference type="Pfam" id="PF02583">
    <property type="entry name" value="Trns_repr_metal"/>
    <property type="match status" value="1"/>
</dbReference>